<keyword id="KW-1185">Reference proteome</keyword>
<keyword id="KW-0687">Ribonucleoprotein</keyword>
<keyword id="KW-0689">Ribosomal protein</keyword>
<feature type="chain" id="PRO_0000181118" description="Large ribosomal subunit protein bL27">
    <location>
        <begin position="1"/>
        <end position="85"/>
    </location>
</feature>
<feature type="region of interest" description="Disordered" evidence="2">
    <location>
        <begin position="1"/>
        <end position="23"/>
    </location>
</feature>
<evidence type="ECO:0000255" key="1">
    <source>
        <dbReference type="HAMAP-Rule" id="MF_00539"/>
    </source>
</evidence>
<evidence type="ECO:0000256" key="2">
    <source>
        <dbReference type="SAM" id="MobiDB-lite"/>
    </source>
</evidence>
<evidence type="ECO:0000305" key="3"/>
<protein>
    <recommendedName>
        <fullName evidence="1">Large ribosomal subunit protein bL27</fullName>
    </recommendedName>
    <alternativeName>
        <fullName evidence="3">50S ribosomal protein L27</fullName>
    </alternativeName>
</protein>
<sequence>MAHKKAGGSSRNGRDSESKRLGVKRFGGQVVRAGNIIVRQRGTHFHPGDNVGCGRDYTLFALTEGRVEFKVKGPAGRKYVSVIPA</sequence>
<name>RL27_METCA</name>
<reference key="1">
    <citation type="journal article" date="2004" name="PLoS Biol.">
        <title>Genomic insights into methanotrophy: the complete genome sequence of Methylococcus capsulatus (Bath).</title>
        <authorList>
            <person name="Ward N.L."/>
            <person name="Larsen O."/>
            <person name="Sakwa J."/>
            <person name="Bruseth L."/>
            <person name="Khouri H.M."/>
            <person name="Durkin A.S."/>
            <person name="Dimitrov G."/>
            <person name="Jiang L."/>
            <person name="Scanlan D."/>
            <person name="Kang K.H."/>
            <person name="Lewis M.R."/>
            <person name="Nelson K.E."/>
            <person name="Methe B.A."/>
            <person name="Wu M."/>
            <person name="Heidelberg J.F."/>
            <person name="Paulsen I.T."/>
            <person name="Fouts D.E."/>
            <person name="Ravel J."/>
            <person name="Tettelin H."/>
            <person name="Ren Q."/>
            <person name="Read T.D."/>
            <person name="DeBoy R.T."/>
            <person name="Seshadri R."/>
            <person name="Salzberg S.L."/>
            <person name="Jensen H.B."/>
            <person name="Birkeland N.K."/>
            <person name="Nelson W.C."/>
            <person name="Dodson R.J."/>
            <person name="Grindhaug S.H."/>
            <person name="Holt I.E."/>
            <person name="Eidhammer I."/>
            <person name="Jonasen I."/>
            <person name="Vanaken S."/>
            <person name="Utterback T.R."/>
            <person name="Feldblyum T.V."/>
            <person name="Fraser C.M."/>
            <person name="Lillehaug J.R."/>
            <person name="Eisen J.A."/>
        </authorList>
    </citation>
    <scope>NUCLEOTIDE SEQUENCE [LARGE SCALE GENOMIC DNA]</scope>
    <source>
        <strain>ATCC 33009 / NCIMB 11132 / Bath</strain>
    </source>
</reference>
<dbReference type="EMBL" id="AE017282">
    <property type="protein sequence ID" value="AAU91766.1"/>
    <property type="molecule type" value="Genomic_DNA"/>
</dbReference>
<dbReference type="RefSeq" id="WP_010961477.1">
    <property type="nucleotide sequence ID" value="NC_002977.6"/>
</dbReference>
<dbReference type="SMR" id="Q605N3"/>
<dbReference type="STRING" id="243233.MCA2247"/>
<dbReference type="GeneID" id="88224453"/>
<dbReference type="KEGG" id="mca:MCA2247"/>
<dbReference type="eggNOG" id="COG0211">
    <property type="taxonomic scope" value="Bacteria"/>
</dbReference>
<dbReference type="HOGENOM" id="CLU_095424_4_1_6"/>
<dbReference type="Proteomes" id="UP000006821">
    <property type="component" value="Chromosome"/>
</dbReference>
<dbReference type="GO" id="GO:0022625">
    <property type="term" value="C:cytosolic large ribosomal subunit"/>
    <property type="evidence" value="ECO:0007669"/>
    <property type="project" value="TreeGrafter"/>
</dbReference>
<dbReference type="GO" id="GO:0003735">
    <property type="term" value="F:structural constituent of ribosome"/>
    <property type="evidence" value="ECO:0007669"/>
    <property type="project" value="InterPro"/>
</dbReference>
<dbReference type="GO" id="GO:0006412">
    <property type="term" value="P:translation"/>
    <property type="evidence" value="ECO:0007669"/>
    <property type="project" value="UniProtKB-UniRule"/>
</dbReference>
<dbReference type="FunFam" id="2.40.50.100:FF:000001">
    <property type="entry name" value="50S ribosomal protein L27"/>
    <property type="match status" value="1"/>
</dbReference>
<dbReference type="Gene3D" id="2.40.50.100">
    <property type="match status" value="1"/>
</dbReference>
<dbReference type="HAMAP" id="MF_00539">
    <property type="entry name" value="Ribosomal_bL27"/>
    <property type="match status" value="1"/>
</dbReference>
<dbReference type="InterPro" id="IPR001684">
    <property type="entry name" value="Ribosomal_bL27"/>
</dbReference>
<dbReference type="InterPro" id="IPR018261">
    <property type="entry name" value="Ribosomal_bL27_CS"/>
</dbReference>
<dbReference type="NCBIfam" id="TIGR00062">
    <property type="entry name" value="L27"/>
    <property type="match status" value="1"/>
</dbReference>
<dbReference type="PANTHER" id="PTHR15893:SF0">
    <property type="entry name" value="LARGE RIBOSOMAL SUBUNIT PROTEIN BL27M"/>
    <property type="match status" value="1"/>
</dbReference>
<dbReference type="PANTHER" id="PTHR15893">
    <property type="entry name" value="RIBOSOMAL PROTEIN L27"/>
    <property type="match status" value="1"/>
</dbReference>
<dbReference type="Pfam" id="PF01016">
    <property type="entry name" value="Ribosomal_L27"/>
    <property type="match status" value="1"/>
</dbReference>
<dbReference type="PRINTS" id="PR00063">
    <property type="entry name" value="RIBOSOMALL27"/>
</dbReference>
<dbReference type="SUPFAM" id="SSF110324">
    <property type="entry name" value="Ribosomal L27 protein-like"/>
    <property type="match status" value="1"/>
</dbReference>
<dbReference type="PROSITE" id="PS00831">
    <property type="entry name" value="RIBOSOMAL_L27"/>
    <property type="match status" value="1"/>
</dbReference>
<comment type="similarity">
    <text evidence="1">Belongs to the bacterial ribosomal protein bL27 family.</text>
</comment>
<gene>
    <name evidence="1" type="primary">rpmA</name>
    <name type="ordered locus">MCA2247</name>
</gene>
<accession>Q605N3</accession>
<organism>
    <name type="scientific">Methylococcus capsulatus (strain ATCC 33009 / NCIMB 11132 / Bath)</name>
    <dbReference type="NCBI Taxonomy" id="243233"/>
    <lineage>
        <taxon>Bacteria</taxon>
        <taxon>Pseudomonadati</taxon>
        <taxon>Pseudomonadota</taxon>
        <taxon>Gammaproteobacteria</taxon>
        <taxon>Methylococcales</taxon>
        <taxon>Methylococcaceae</taxon>
        <taxon>Methylococcus</taxon>
    </lineage>
</organism>
<proteinExistence type="inferred from homology"/>